<proteinExistence type="evidence at protein level"/>
<evidence type="ECO:0000250" key="1">
    <source>
        <dbReference type="UniProtKB" id="P0A9G6"/>
    </source>
</evidence>
<evidence type="ECO:0000250" key="2">
    <source>
        <dbReference type="UniProtKB" id="P9WKK7"/>
    </source>
</evidence>
<evidence type="ECO:0000256" key="3">
    <source>
        <dbReference type="SAM" id="MobiDB-lite"/>
    </source>
</evidence>
<evidence type="ECO:0000269" key="4">
    <source>
    </source>
</evidence>
<evidence type="ECO:0000269" key="5">
    <source>
    </source>
</evidence>
<evidence type="ECO:0000303" key="6">
    <source>
    </source>
</evidence>
<evidence type="ECO:0000305" key="7"/>
<evidence type="ECO:0000305" key="8">
    <source>
    </source>
</evidence>
<keyword id="KW-0903">Direct protein sequencing</keyword>
<keyword id="KW-0329">Glyoxylate bypass</keyword>
<keyword id="KW-0456">Lyase</keyword>
<keyword id="KW-0460">Magnesium</keyword>
<keyword id="KW-0479">Metal-binding</keyword>
<keyword id="KW-1185">Reference proteome</keyword>
<sequence>MNPTELDSDVFAQDVDNQKARELREMLNTQDFVFAPGMYHALDARLAEMTGHDAAYMSGYSTVLGQFGFPDLEMVTMTEMVENAKRMVEATNLPVIADCDTGYGGIHNVRRAVREYEKAGVAAVHIEDQTTPKRCGHIAGKQIVSREKAKARFEAAVDAKQSEDTVVIARTDAYGSSNGDWDEHVERGRIYADAGVDIVWPEMPNPSREDAVAYAEEIHETHPDLKLAFNYSSSFAWSEEEDPLTFQELGDLGYKYIFITLFGLHSGAHAVYEDFKKLAEQDEEGQFDLEQRYLDHPTESHHELSFVSRYQDIETEFDPEARRRIEESEGFSEEQADPITSNDDD</sequence>
<feature type="chain" id="PRO_0000429585" description="Isocitrate lyase">
    <location>
        <begin position="1"/>
        <end position="345"/>
    </location>
</feature>
<feature type="region of interest" description="Disordered" evidence="3">
    <location>
        <begin position="318"/>
        <end position="345"/>
    </location>
</feature>
<feature type="compositionally biased region" description="Acidic residues" evidence="3">
    <location>
        <begin position="328"/>
        <end position="345"/>
    </location>
</feature>
<feature type="active site" description="Proton acceptor" evidence="2">
    <location>
        <position position="135"/>
    </location>
</feature>
<feature type="binding site" evidence="2">
    <location>
        <begin position="58"/>
        <end position="60"/>
    </location>
    <ligand>
        <name>substrate</name>
    </ligand>
</feature>
<feature type="binding site" evidence="2">
    <location>
        <position position="98"/>
    </location>
    <ligand>
        <name>Mg(2+)</name>
        <dbReference type="ChEBI" id="CHEBI:18420"/>
    </ligand>
</feature>
<feature type="binding site" evidence="2">
    <location>
        <begin position="136"/>
        <end position="137"/>
    </location>
    <ligand>
        <name>substrate</name>
    </ligand>
</feature>
<feature type="binding site" evidence="2">
    <location>
        <position position="170"/>
    </location>
    <ligand>
        <name>substrate</name>
    </ligand>
</feature>
<feature type="binding site" evidence="2">
    <location>
        <begin position="230"/>
        <end position="234"/>
    </location>
    <ligand>
        <name>substrate</name>
    </ligand>
</feature>
<feature type="binding site" evidence="2">
    <location>
        <position position="260"/>
    </location>
    <ligand>
        <name>substrate</name>
    </ligand>
</feature>
<gene>
    <name type="primary">aceA</name>
    <name type="ordered locus">HVO_1984</name>
    <name type="ORF">C498_05201</name>
</gene>
<reference key="1">
    <citation type="journal article" date="2001" name="Biochim. Biophys. Acta">
        <title>Sequencing, phylogenetic and transcriptional analysis of the glyoxylate bypass operon (ace) in the halophilic archaeon Haloferax volcanii.</title>
        <authorList>
            <person name="Serrano J.A."/>
            <person name="Bonete M.J."/>
        </authorList>
    </citation>
    <scope>NUCLEOTIDE SEQUENCE [GENOMIC DNA]</scope>
    <scope>PROTEIN SEQUENCE OF 1-18</scope>
    <scope>FUNCTION</scope>
    <scope>MASS SPECTROMETRY</scope>
    <scope>SUBUNIT</scope>
    <source>
        <strain>ATCC 29605 / DSM 3757 / JCM 8879 / NBRC 14742 / NCIMB 2012 / VKM B-1768 / DS2</strain>
    </source>
</reference>
<reference key="2">
    <citation type="journal article" date="2010" name="PLoS ONE">
        <title>The complete genome sequence of Haloferax volcanii DS2, a model archaeon.</title>
        <authorList>
            <person name="Hartman A.L."/>
            <person name="Norais C."/>
            <person name="Badger J.H."/>
            <person name="Delmas S."/>
            <person name="Haldenby S."/>
            <person name="Madupu R."/>
            <person name="Robinson J."/>
            <person name="Khouri H."/>
            <person name="Ren Q."/>
            <person name="Lowe T.M."/>
            <person name="Maupin-Furlow J."/>
            <person name="Pohlschroder M."/>
            <person name="Daniels C."/>
            <person name="Pfeiffer F."/>
            <person name="Allers T."/>
            <person name="Eisen J.A."/>
        </authorList>
    </citation>
    <scope>NUCLEOTIDE SEQUENCE [LARGE SCALE GENOMIC DNA]</scope>
    <source>
        <strain>ATCC 29605 / DSM 3757 / JCM 8879 / NBRC 14742 / NCIMB 2012 / VKM B-1768 / DS2</strain>
    </source>
</reference>
<reference key="3">
    <citation type="journal article" date="2014" name="PLoS Genet.">
        <title>Phylogenetically driven sequencing of extremely halophilic archaea reveals strategies for static and dynamic osmo-response.</title>
        <authorList>
            <person name="Becker E.A."/>
            <person name="Seitzer P.M."/>
            <person name="Tritt A."/>
            <person name="Larsen D."/>
            <person name="Krusor M."/>
            <person name="Yao A.I."/>
            <person name="Wu D."/>
            <person name="Madern D."/>
            <person name="Eisen J.A."/>
            <person name="Darling A.E."/>
            <person name="Facciotti M.T."/>
        </authorList>
    </citation>
    <scope>NUCLEOTIDE SEQUENCE [LARGE SCALE GENOMIC DNA]</scope>
    <source>
        <strain>ATCC 29605 / DSM 3757 / JCM 8879 / NBRC 14742 / NCIMB 2012 / VKM B-1768 / DS2</strain>
    </source>
</reference>
<reference key="4">
    <citation type="journal article" date="1998" name="FEBS Lett.">
        <title>Operation of glyoxylate cycle in halophilic archaea: presence of malate synthase and isocitrate lyase in Haloferax volcanii.</title>
        <authorList>
            <person name="Serrano J.A."/>
            <person name="Camacho M."/>
            <person name="Bonete M.J."/>
        </authorList>
    </citation>
    <scope>FUNCTION</scope>
    <scope>CATALYTIC ACTIVITY</scope>
    <scope>BIOPHYSICOCHEMICAL PROPERTIES</scope>
    <scope>SUBUNIT</scope>
    <source>
        <strain>ATCC 29605 / DSM 3757 / JCM 8879 / NBRC 14742 / NCIMB 2012 / VKM B-1768 / DS2</strain>
    </source>
</reference>
<accession>D4GTL3</accession>
<accession>Q977U5</accession>
<comment type="function">
    <text evidence="4 5">Involved in the metabolic adaptation in response to environmental changes. Catalyzes the reversible formation of succinate and glyoxylate from isocitrate, a key step of the glyoxylate cycle, which operates as an anaplerotic route for replenishing the tricarboxylic acid cycle during growth on fatty acid substrates.</text>
</comment>
<comment type="catalytic activity">
    <reaction evidence="5">
        <text>D-threo-isocitrate = glyoxylate + succinate</text>
        <dbReference type="Rhea" id="RHEA:13245"/>
        <dbReference type="ChEBI" id="CHEBI:15562"/>
        <dbReference type="ChEBI" id="CHEBI:30031"/>
        <dbReference type="ChEBI" id="CHEBI:36655"/>
        <dbReference type="EC" id="4.1.3.1"/>
    </reaction>
</comment>
<comment type="cofactor">
    <cofactor evidence="1">
        <name>Mg(2+)</name>
        <dbReference type="ChEBI" id="CHEBI:18420"/>
    </cofactor>
</comment>
<comment type="biophysicochemical properties">
    <kinetics>
        <KM evidence="5">1.16 uM for isocitrate (at pH 7 and 40 degrees Celsius)</KM>
    </kinetics>
    <phDependence>
        <text evidence="5">Optimum pH is 7. Very little activity is detected at pH 6.1 or 8.0.</text>
    </phDependence>
    <temperatureDependence>
        <text evidence="5">Optimum temperature is 55 degrees Celsius. Very little activity is found above 65 degrees Celsius, and the activity at 40 degrees Celsius is 50% of the maximum.</text>
    </temperatureDependence>
</comment>
<comment type="pathway">
    <text evidence="8">Carbohydrate metabolism; glyoxylate cycle; (S)-malate from isocitrate: step 1/2.</text>
</comment>
<comment type="subunit">
    <text evidence="4 5">Homotetramer or homotrimer.</text>
</comment>
<comment type="mass spectrometry"/>
<comment type="similarity">
    <text evidence="7">Belongs to the isocitrate lyase/PEP mutase superfamily.</text>
</comment>
<dbReference type="EC" id="4.1.3.1" evidence="5"/>
<dbReference type="EMBL" id="AJ250922">
    <property type="protein sequence ID" value="CAC48388.1"/>
    <property type="molecule type" value="Genomic_DNA"/>
</dbReference>
<dbReference type="EMBL" id="CP001956">
    <property type="protein sequence ID" value="ADE02416.1"/>
    <property type="molecule type" value="Genomic_DNA"/>
</dbReference>
<dbReference type="EMBL" id="AOHU01000038">
    <property type="protein sequence ID" value="ELY34498.1"/>
    <property type="molecule type" value="Genomic_DNA"/>
</dbReference>
<dbReference type="RefSeq" id="WP_004041865.1">
    <property type="nucleotide sequence ID" value="NC_013967.1"/>
</dbReference>
<dbReference type="SMR" id="D4GTL3"/>
<dbReference type="STRING" id="309800.HVO_1984"/>
<dbReference type="PaxDb" id="309800-C498_05201"/>
<dbReference type="EnsemblBacteria" id="ADE02416">
    <property type="protein sequence ID" value="ADE02416"/>
    <property type="gene ID" value="HVO_1984"/>
</dbReference>
<dbReference type="GeneID" id="8926360"/>
<dbReference type="KEGG" id="hvo:HVO_1984"/>
<dbReference type="PATRIC" id="fig|309800.29.peg.1012"/>
<dbReference type="eggNOG" id="arCOG00582">
    <property type="taxonomic scope" value="Archaea"/>
</dbReference>
<dbReference type="HOGENOM" id="CLU_027389_3_2_2"/>
<dbReference type="OrthoDB" id="9667at2157"/>
<dbReference type="UniPathway" id="UPA00703">
    <property type="reaction ID" value="UER00719"/>
</dbReference>
<dbReference type="Proteomes" id="UP000008243">
    <property type="component" value="Chromosome"/>
</dbReference>
<dbReference type="Proteomes" id="UP000011532">
    <property type="component" value="Unassembled WGS sequence"/>
</dbReference>
<dbReference type="GO" id="GO:0004451">
    <property type="term" value="F:isocitrate lyase activity"/>
    <property type="evidence" value="ECO:0000314"/>
    <property type="project" value="UniProtKB"/>
</dbReference>
<dbReference type="GO" id="GO:0046872">
    <property type="term" value="F:metal ion binding"/>
    <property type="evidence" value="ECO:0007669"/>
    <property type="project" value="UniProtKB-KW"/>
</dbReference>
<dbReference type="GO" id="GO:0006097">
    <property type="term" value="P:glyoxylate cycle"/>
    <property type="evidence" value="ECO:0000314"/>
    <property type="project" value="UniProtKB"/>
</dbReference>
<dbReference type="CDD" id="cd00377">
    <property type="entry name" value="ICL_PEPM"/>
    <property type="match status" value="1"/>
</dbReference>
<dbReference type="FunFam" id="3.20.20.60:FF:000058">
    <property type="entry name" value="Isocitrate lyase"/>
    <property type="match status" value="1"/>
</dbReference>
<dbReference type="Gene3D" id="3.20.20.60">
    <property type="entry name" value="Phosphoenolpyruvate-binding domains"/>
    <property type="match status" value="1"/>
</dbReference>
<dbReference type="InterPro" id="IPR039556">
    <property type="entry name" value="ICL/PEPM"/>
</dbReference>
<dbReference type="InterPro" id="IPR006254">
    <property type="entry name" value="Isocitrate_lyase"/>
</dbReference>
<dbReference type="InterPro" id="IPR015813">
    <property type="entry name" value="Pyrv/PenolPyrv_kinase-like_dom"/>
</dbReference>
<dbReference type="InterPro" id="IPR040442">
    <property type="entry name" value="Pyrv_kinase-like_dom_sf"/>
</dbReference>
<dbReference type="PANTHER" id="PTHR42905:SF5">
    <property type="entry name" value="CARBOXYVINYL-CARBOXYPHOSPHONATE PHOSPHORYLMUTASE, CHLOROPLASTIC"/>
    <property type="match status" value="1"/>
</dbReference>
<dbReference type="PANTHER" id="PTHR42905">
    <property type="entry name" value="PHOSPHOENOLPYRUVATE CARBOXYLASE"/>
    <property type="match status" value="1"/>
</dbReference>
<dbReference type="Pfam" id="PF13714">
    <property type="entry name" value="PEP_mutase"/>
    <property type="match status" value="1"/>
</dbReference>
<dbReference type="PIRSF" id="PIRSF001362">
    <property type="entry name" value="Isocit_lyase"/>
    <property type="match status" value="1"/>
</dbReference>
<dbReference type="SUPFAM" id="SSF51621">
    <property type="entry name" value="Phosphoenolpyruvate/pyruvate domain"/>
    <property type="match status" value="1"/>
</dbReference>
<protein>
    <recommendedName>
        <fullName evidence="6">Isocitrate lyase</fullName>
        <shortName evidence="6">ICL</shortName>
        <ecNumber evidence="5">4.1.3.1</ecNumber>
    </recommendedName>
    <alternativeName>
        <fullName evidence="6">Isocitrase</fullName>
    </alternativeName>
    <alternativeName>
        <fullName evidence="6">Isocitratase</fullName>
    </alternativeName>
</protein>
<name>ACEA_HALVD</name>
<organism>
    <name type="scientific">Haloferax volcanii (strain ATCC 29605 / DSM 3757 / JCM 8879 / NBRC 14742 / NCIMB 2012 / VKM B-1768 / DS2)</name>
    <name type="common">Halobacterium volcanii</name>
    <dbReference type="NCBI Taxonomy" id="309800"/>
    <lineage>
        <taxon>Archaea</taxon>
        <taxon>Methanobacteriati</taxon>
        <taxon>Methanobacteriota</taxon>
        <taxon>Stenosarchaea group</taxon>
        <taxon>Halobacteria</taxon>
        <taxon>Halobacteriales</taxon>
        <taxon>Haloferacaceae</taxon>
        <taxon>Haloferax</taxon>
    </lineage>
</organism>